<accession>A0B9U9</accession>
<sequence length="151" mass="17292">MYAIIRLRGEVNTKPAIRDTLSMLRLHRVNHCVFVREDEHYRGMIQVVKDYVAWGKADADLLTMILEKRGRLSGNRRLTDEVVREISPYKSIRELAEAVCAGAASLKDFGIKPVFRLHPPRKGHRGIKKTVKEGGELGYHESIAELIKKMR</sequence>
<organism>
    <name type="scientific">Methanothrix thermoacetophila (strain DSM 6194 / JCM 14653 / NBRC 101360 / PT)</name>
    <name type="common">Methanosaeta thermophila</name>
    <dbReference type="NCBI Taxonomy" id="349307"/>
    <lineage>
        <taxon>Archaea</taxon>
        <taxon>Methanobacteriati</taxon>
        <taxon>Methanobacteriota</taxon>
        <taxon>Stenosarchaea group</taxon>
        <taxon>Methanomicrobia</taxon>
        <taxon>Methanotrichales</taxon>
        <taxon>Methanotrichaceae</taxon>
        <taxon>Methanothrix</taxon>
    </lineage>
</organism>
<feature type="chain" id="PRO_0000347169" description="Large ribosomal subunit protein uL30">
    <location>
        <begin position="1"/>
        <end position="151"/>
    </location>
</feature>
<comment type="subunit">
    <text evidence="1">Part of the 50S ribosomal subunit.</text>
</comment>
<comment type="similarity">
    <text evidence="1">Belongs to the universal ribosomal protein uL30 family.</text>
</comment>
<proteinExistence type="inferred from homology"/>
<dbReference type="EMBL" id="CP000477">
    <property type="protein sequence ID" value="ABK15473.1"/>
    <property type="molecule type" value="Genomic_DNA"/>
</dbReference>
<dbReference type="RefSeq" id="WP_011696851.1">
    <property type="nucleotide sequence ID" value="NC_008553.1"/>
</dbReference>
<dbReference type="SMR" id="A0B9U9"/>
<dbReference type="STRING" id="349307.Mthe_1707"/>
<dbReference type="GeneID" id="4462667"/>
<dbReference type="KEGG" id="mtp:Mthe_1707"/>
<dbReference type="HOGENOM" id="CLU_055156_6_0_2"/>
<dbReference type="OrthoDB" id="6379at2157"/>
<dbReference type="Proteomes" id="UP000000674">
    <property type="component" value="Chromosome"/>
</dbReference>
<dbReference type="GO" id="GO:0022625">
    <property type="term" value="C:cytosolic large ribosomal subunit"/>
    <property type="evidence" value="ECO:0007669"/>
    <property type="project" value="TreeGrafter"/>
</dbReference>
<dbReference type="GO" id="GO:0003723">
    <property type="term" value="F:RNA binding"/>
    <property type="evidence" value="ECO:0007669"/>
    <property type="project" value="TreeGrafter"/>
</dbReference>
<dbReference type="GO" id="GO:0003735">
    <property type="term" value="F:structural constituent of ribosome"/>
    <property type="evidence" value="ECO:0007669"/>
    <property type="project" value="InterPro"/>
</dbReference>
<dbReference type="GO" id="GO:0000463">
    <property type="term" value="P:maturation of LSU-rRNA from tricistronic rRNA transcript (SSU-rRNA, 5.8S rRNA, LSU-rRNA)"/>
    <property type="evidence" value="ECO:0007669"/>
    <property type="project" value="TreeGrafter"/>
</dbReference>
<dbReference type="GO" id="GO:0006412">
    <property type="term" value="P:translation"/>
    <property type="evidence" value="ECO:0007669"/>
    <property type="project" value="UniProtKB-UniRule"/>
</dbReference>
<dbReference type="CDD" id="cd01657">
    <property type="entry name" value="Ribosomal_L7_archeal_euk"/>
    <property type="match status" value="1"/>
</dbReference>
<dbReference type="Gene3D" id="1.10.15.30">
    <property type="match status" value="1"/>
</dbReference>
<dbReference type="Gene3D" id="3.30.1390.20">
    <property type="entry name" value="Ribosomal protein L30, ferredoxin-like fold domain"/>
    <property type="match status" value="1"/>
</dbReference>
<dbReference type="HAMAP" id="MF_01371_A">
    <property type="entry name" value="Ribosomal_uL30_A"/>
    <property type="match status" value="1"/>
</dbReference>
<dbReference type="InterPro" id="IPR036919">
    <property type="entry name" value="Ribo_uL30_ferredoxin-like_sf"/>
</dbReference>
<dbReference type="InterPro" id="IPR039699">
    <property type="entry name" value="Ribosomal_uL30"/>
</dbReference>
<dbReference type="InterPro" id="IPR005997">
    <property type="entry name" value="Ribosomal_uL30_arc"/>
</dbReference>
<dbReference type="InterPro" id="IPR018038">
    <property type="entry name" value="Ribosomal_uL30_CS"/>
</dbReference>
<dbReference type="InterPro" id="IPR035808">
    <property type="entry name" value="Ribosomal_uL30_euk_arc"/>
</dbReference>
<dbReference type="InterPro" id="IPR016082">
    <property type="entry name" value="Ribosomal_uL30_ferredoxin-like"/>
</dbReference>
<dbReference type="NCBIfam" id="NF004711">
    <property type="entry name" value="PRK06049.1"/>
    <property type="match status" value="1"/>
</dbReference>
<dbReference type="NCBIfam" id="TIGR01309">
    <property type="entry name" value="uL30_arch"/>
    <property type="match status" value="1"/>
</dbReference>
<dbReference type="PANTHER" id="PTHR11524">
    <property type="entry name" value="60S RIBOSOMAL PROTEIN L7"/>
    <property type="match status" value="1"/>
</dbReference>
<dbReference type="PANTHER" id="PTHR11524:SF16">
    <property type="entry name" value="LARGE RIBOSOMAL SUBUNIT PROTEIN UL30"/>
    <property type="match status" value="1"/>
</dbReference>
<dbReference type="Pfam" id="PF00327">
    <property type="entry name" value="Ribosomal_L30"/>
    <property type="match status" value="1"/>
</dbReference>
<dbReference type="SUPFAM" id="SSF55129">
    <property type="entry name" value="Ribosomal protein L30p/L7e"/>
    <property type="match status" value="1"/>
</dbReference>
<dbReference type="PROSITE" id="PS00634">
    <property type="entry name" value="RIBOSOMAL_L30"/>
    <property type="match status" value="1"/>
</dbReference>
<reference key="1">
    <citation type="submission" date="2006-10" db="EMBL/GenBank/DDBJ databases">
        <title>Complete sequence of Methanosaeta thermophila PT.</title>
        <authorList>
            <consortium name="US DOE Joint Genome Institute"/>
            <person name="Copeland A."/>
            <person name="Lucas S."/>
            <person name="Lapidus A."/>
            <person name="Barry K."/>
            <person name="Detter J.C."/>
            <person name="Glavina del Rio T."/>
            <person name="Hammon N."/>
            <person name="Israni S."/>
            <person name="Pitluck S."/>
            <person name="Chain P."/>
            <person name="Malfatti S."/>
            <person name="Shin M."/>
            <person name="Vergez L."/>
            <person name="Schmutz J."/>
            <person name="Larimer F."/>
            <person name="Land M."/>
            <person name="Hauser L."/>
            <person name="Kyrpides N."/>
            <person name="Kim E."/>
            <person name="Smith K.S."/>
            <person name="Ingram-Smith C."/>
            <person name="Richardson P."/>
        </authorList>
    </citation>
    <scope>NUCLEOTIDE SEQUENCE [LARGE SCALE GENOMIC DNA]</scope>
    <source>
        <strain>DSM 6194 / JCM 14653 / NBRC 101360 / PT</strain>
    </source>
</reference>
<keyword id="KW-1185">Reference proteome</keyword>
<keyword id="KW-0687">Ribonucleoprotein</keyword>
<keyword id="KW-0689">Ribosomal protein</keyword>
<evidence type="ECO:0000255" key="1">
    <source>
        <dbReference type="HAMAP-Rule" id="MF_01371"/>
    </source>
</evidence>
<evidence type="ECO:0000305" key="2"/>
<protein>
    <recommendedName>
        <fullName evidence="1">Large ribosomal subunit protein uL30</fullName>
    </recommendedName>
    <alternativeName>
        <fullName evidence="2">50S ribosomal protein L30</fullName>
    </alternativeName>
</protein>
<gene>
    <name evidence="1" type="primary">rpl30</name>
    <name type="ordered locus">Mthe_1707</name>
</gene>
<name>RL30_METTP</name>